<evidence type="ECO:0000250" key="1"/>
<evidence type="ECO:0000250" key="2">
    <source>
        <dbReference type="UniProtKB" id="Q96JF0"/>
    </source>
</evidence>
<evidence type="ECO:0000255" key="3"/>
<evidence type="ECO:0000256" key="4">
    <source>
        <dbReference type="SAM" id="MobiDB-lite"/>
    </source>
</evidence>
<evidence type="ECO:0000305" key="5"/>
<sequence length="514" mass="58533">MKSSLKQWRRLALGLILVWALLFLALLSYFMESRVDDPHAAAALSYTDTRRLTSLQGNPRTIMATHLGLATSSAPSTSSNTQQEQSQEENPSADPQPSPLSQEAYPYPDPQSLAAWSAFGTQDVGSRSTGVSRNRERQEYNQDSPQEDEDEEEEVIGGEEEDEEGGDEGRGRTTKRVARHGSSDPHEYYVPRYKSIVHGLWKGSLSMGMLSPRLQRAMKDYLNNNKHGVAYRGHRKAKQSRQQVLCELKKREKIRTLDGAEMPFSKLGWQKIVPALPLSQIHRPGLKTCAVVTSAGAMLHSGLGKEIDSHDAVLRFNTAPTVGYERDVGNKTTIRIINSQILANPMHRFNRSSLYKNVTLVAWDPAPYTLNLHQWYSNPDYNLFTPYMEYRMRFPSQPFYILHPKYIWQLWDVIQANNLENIQPNPPSSGFIGILLMMSLCEEVHVYEYIPSLRQTDLCHYHERYYDAACTLGAYHPLLYEKMLIQRMNIGSEDELKRKGKVTLPGFNKVHCEP</sequence>
<gene>
    <name type="primary">st6gal2</name>
</gene>
<dbReference type="EC" id="2.4.3.1" evidence="2"/>
<dbReference type="EMBL" id="AJ627627">
    <property type="protein sequence ID" value="CAF29495.1"/>
    <property type="molecule type" value="mRNA"/>
</dbReference>
<dbReference type="EMBL" id="AJ705078">
    <property type="protein sequence ID" value="CAG29200.1"/>
    <property type="molecule type" value="mRNA"/>
</dbReference>
<dbReference type="SMR" id="Q701R2"/>
<dbReference type="FunCoup" id="Q701R2">
    <property type="interactions" value="438"/>
</dbReference>
<dbReference type="STRING" id="7955.ENSDARP00000057483"/>
<dbReference type="CAZy" id="GT29">
    <property type="family name" value="Glycosyltransferase Family 29"/>
</dbReference>
<dbReference type="GlyCosmos" id="Q701R2">
    <property type="glycosylation" value="3 sites, No reported glycans"/>
</dbReference>
<dbReference type="PaxDb" id="7955-ENSDARP00000122397"/>
<dbReference type="AGR" id="ZFIN:ZDB-GENE-060322-4"/>
<dbReference type="ZFIN" id="ZDB-GENE-060322-4">
    <property type="gene designation" value="st6gal2a"/>
</dbReference>
<dbReference type="eggNOG" id="KOG2692">
    <property type="taxonomic scope" value="Eukaryota"/>
</dbReference>
<dbReference type="InParanoid" id="Q701R2"/>
<dbReference type="PhylomeDB" id="Q701R2"/>
<dbReference type="BRENDA" id="2.4.99.1">
    <property type="organism ID" value="928"/>
</dbReference>
<dbReference type="PRO" id="PR:Q701R2"/>
<dbReference type="Proteomes" id="UP000000437">
    <property type="component" value="Unplaced"/>
</dbReference>
<dbReference type="GO" id="GO:0005794">
    <property type="term" value="C:Golgi apparatus"/>
    <property type="evidence" value="ECO:0000318"/>
    <property type="project" value="GO_Central"/>
</dbReference>
<dbReference type="GO" id="GO:0032580">
    <property type="term" value="C:Golgi cisterna membrane"/>
    <property type="evidence" value="ECO:0007669"/>
    <property type="project" value="UniProtKB-SubCell"/>
</dbReference>
<dbReference type="GO" id="GO:0003835">
    <property type="term" value="F:beta-galactoside alpha-2,6-sialyltransferase activity"/>
    <property type="evidence" value="ECO:0000250"/>
    <property type="project" value="ZFIN"/>
</dbReference>
<dbReference type="GO" id="GO:0006486">
    <property type="term" value="P:protein glycosylation"/>
    <property type="evidence" value="ECO:0007669"/>
    <property type="project" value="InterPro"/>
</dbReference>
<dbReference type="GO" id="GO:0097503">
    <property type="term" value="P:sialylation"/>
    <property type="evidence" value="ECO:0000318"/>
    <property type="project" value="GO_Central"/>
</dbReference>
<dbReference type="CDD" id="cd23986">
    <property type="entry name" value="GT29_ST6GAL2"/>
    <property type="match status" value="1"/>
</dbReference>
<dbReference type="FunFam" id="3.90.1480.20:FF:000010">
    <property type="entry name" value="ST6 beta-galactoside alpha-2,6-sialyltransferase 2"/>
    <property type="match status" value="1"/>
</dbReference>
<dbReference type="Gene3D" id="3.90.1480.20">
    <property type="entry name" value="Glycosyl transferase family 29"/>
    <property type="match status" value="1"/>
</dbReference>
<dbReference type="InterPro" id="IPR001675">
    <property type="entry name" value="Glyco_trans_29"/>
</dbReference>
<dbReference type="InterPro" id="IPR038578">
    <property type="entry name" value="GT29-like_sf"/>
</dbReference>
<dbReference type="PANTHER" id="PTHR46059">
    <property type="entry name" value="BETA-GALACTOSIDE ALPHA-2,6-SIALYLTRANSFERASE"/>
    <property type="match status" value="1"/>
</dbReference>
<dbReference type="PANTHER" id="PTHR46059:SF3">
    <property type="entry name" value="BETA-GALACTOSIDE ALPHA-2,6-SIALYLTRANSFERASE 2"/>
    <property type="match status" value="1"/>
</dbReference>
<dbReference type="Pfam" id="PF00777">
    <property type="entry name" value="Glyco_transf_29"/>
    <property type="match status" value="1"/>
</dbReference>
<feature type="chain" id="PRO_0000314790" description="Beta-galactoside alpha-2,6-sialyltransferase 2">
    <location>
        <begin position="1"/>
        <end position="514"/>
    </location>
</feature>
<feature type="topological domain" description="Cytoplasmic" evidence="3">
    <location>
        <begin position="1"/>
        <end position="10"/>
    </location>
</feature>
<feature type="transmembrane region" description="Helical; Signal-anchor for type II membrane protein" evidence="3">
    <location>
        <begin position="11"/>
        <end position="31"/>
    </location>
</feature>
<feature type="topological domain" description="Lumenal" evidence="3">
    <location>
        <begin position="32"/>
        <end position="514"/>
    </location>
</feature>
<feature type="region of interest" description="Disordered" evidence="4">
    <location>
        <begin position="70"/>
        <end position="183"/>
    </location>
</feature>
<feature type="compositionally biased region" description="Low complexity" evidence="4">
    <location>
        <begin position="70"/>
        <end position="92"/>
    </location>
</feature>
<feature type="compositionally biased region" description="Polar residues" evidence="4">
    <location>
        <begin position="119"/>
        <end position="132"/>
    </location>
</feature>
<feature type="compositionally biased region" description="Acidic residues" evidence="4">
    <location>
        <begin position="145"/>
        <end position="166"/>
    </location>
</feature>
<feature type="glycosylation site" description="N-linked (GlcNAc...) asparagine" evidence="3">
    <location>
        <position position="330"/>
    </location>
</feature>
<feature type="glycosylation site" description="N-linked (GlcNAc...) asparagine" evidence="3">
    <location>
        <position position="350"/>
    </location>
</feature>
<feature type="glycosylation site" description="N-linked (GlcNAc...) asparagine" evidence="3">
    <location>
        <position position="357"/>
    </location>
</feature>
<feature type="disulfide bond" evidence="1">
    <location>
        <begin position="246"/>
        <end position="512"/>
    </location>
</feature>
<feature type="disulfide bond" evidence="1">
    <location>
        <begin position="289"/>
        <end position="441"/>
    </location>
</feature>
<feature type="disulfide bond" evidence="1">
    <location>
        <begin position="459"/>
        <end position="470"/>
    </location>
</feature>
<organism>
    <name type="scientific">Danio rerio</name>
    <name type="common">Zebrafish</name>
    <name type="synonym">Brachydanio rerio</name>
    <dbReference type="NCBI Taxonomy" id="7955"/>
    <lineage>
        <taxon>Eukaryota</taxon>
        <taxon>Metazoa</taxon>
        <taxon>Chordata</taxon>
        <taxon>Craniata</taxon>
        <taxon>Vertebrata</taxon>
        <taxon>Euteleostomi</taxon>
        <taxon>Actinopterygii</taxon>
        <taxon>Neopterygii</taxon>
        <taxon>Teleostei</taxon>
        <taxon>Ostariophysi</taxon>
        <taxon>Cypriniformes</taxon>
        <taxon>Danionidae</taxon>
        <taxon>Danioninae</taxon>
        <taxon>Danio</taxon>
    </lineage>
</organism>
<reference key="1">
    <citation type="journal article" date="2005" name="Glycobiology">
        <title>The animal sialyltransferases and sialyltransferase-related genes: a phylogenetic approach.</title>
        <authorList>
            <person name="Harduin-Lepers A."/>
            <person name="Mollicone R."/>
            <person name="Delannoy P."/>
            <person name="Oriol R."/>
        </authorList>
    </citation>
    <scope>NUCLEOTIDE SEQUENCE [MRNA]</scope>
</reference>
<reference key="2">
    <citation type="submission" date="2004-05" db="EMBL/GenBank/DDBJ databases">
        <title>Phylogeny of sialyltransferases.</title>
        <authorList>
            <person name="Lehmann F."/>
        </authorList>
    </citation>
    <scope>NUCLEOTIDE SEQUENCE [MRNA]</scope>
</reference>
<proteinExistence type="evidence at transcript level"/>
<protein>
    <recommendedName>
        <fullName>Beta-galactoside alpha-2,6-sialyltransferase 2</fullName>
        <shortName>Alpha 2,6-ST 2</shortName>
        <ecNumber evidence="2">2.4.3.1</ecNumber>
    </recommendedName>
    <alternativeName>
        <fullName>CMP-N-acetylneuraminate-beta-galactosamide-alpha-2,6-sialyltransferase 2</fullName>
    </alternativeName>
    <alternativeName>
        <fullName>ST6Gal II</fullName>
        <shortName>ST6GalII</shortName>
    </alternativeName>
    <alternativeName>
        <fullName>Sialyltransferase 2</fullName>
    </alternativeName>
</protein>
<accession>Q701R2</accession>
<keyword id="KW-1015">Disulfide bond</keyword>
<keyword id="KW-0325">Glycoprotein</keyword>
<keyword id="KW-0328">Glycosyltransferase</keyword>
<keyword id="KW-0333">Golgi apparatus</keyword>
<keyword id="KW-0472">Membrane</keyword>
<keyword id="KW-1185">Reference proteome</keyword>
<keyword id="KW-0735">Signal-anchor</keyword>
<keyword id="KW-0808">Transferase</keyword>
<keyword id="KW-0812">Transmembrane</keyword>
<keyword id="KW-1133">Transmembrane helix</keyword>
<comment type="function">
    <text evidence="1">Transfers sialic acid from the donor of substrate CMP-sialic acid to galactose containing acceptor substrates.</text>
</comment>
<comment type="catalytic activity">
    <reaction evidence="2">
        <text>a beta-D-galactoside + CMP-N-acetyl-beta-neuraminate = an N-acetyl-alpha-neuraminyl-(2-&gt;6)-beta-D-galactosyl derivative + CMP + H(+)</text>
        <dbReference type="Rhea" id="RHEA:52104"/>
        <dbReference type="ChEBI" id="CHEBI:15378"/>
        <dbReference type="ChEBI" id="CHEBI:28034"/>
        <dbReference type="ChEBI" id="CHEBI:57812"/>
        <dbReference type="ChEBI" id="CHEBI:60377"/>
        <dbReference type="ChEBI" id="CHEBI:136398"/>
        <dbReference type="EC" id="2.4.3.1"/>
    </reaction>
</comment>
<comment type="subcellular location">
    <subcellularLocation>
        <location evidence="1">Golgi apparatus</location>
        <location evidence="1">Golgi stack membrane</location>
        <topology evidence="1">Single-pass type II membrane protein</topology>
    </subcellularLocation>
</comment>
<comment type="similarity">
    <text evidence="5">Belongs to the glycosyltransferase 29 family.</text>
</comment>
<name>SIAT2_DANRE</name>